<sequence length="97" mass="11259">MEQAPENQGPAKEPFNEWALELLEELKAEAVRHFPRPWLHALGQYIYETYGDTWVGVMAIIRILQQLLFTHYRIGCQHSRIGINPRGRGRRNGSSRS</sequence>
<organism>
    <name type="scientific">Human immunodeficiency virus type 1 group O (isolate ANT70)</name>
    <name type="common">HIV-1</name>
    <dbReference type="NCBI Taxonomy" id="327105"/>
    <lineage>
        <taxon>Viruses</taxon>
        <taxon>Riboviria</taxon>
        <taxon>Pararnavirae</taxon>
        <taxon>Artverviricota</taxon>
        <taxon>Revtraviricetes</taxon>
        <taxon>Ortervirales</taxon>
        <taxon>Retroviridae</taxon>
        <taxon>Orthoretrovirinae</taxon>
        <taxon>Lentivirus</taxon>
        <taxon>Human immunodeficiency virus type 1</taxon>
    </lineage>
</organism>
<protein>
    <recommendedName>
        <fullName evidence="1">Protein Vpr</fullName>
    </recommendedName>
    <alternativeName>
        <fullName evidence="1">R ORF protein</fullName>
    </alternativeName>
    <alternativeName>
        <fullName evidence="1">Viral protein R</fullName>
    </alternativeName>
</protein>
<comment type="function">
    <text evidence="1">During virus replication, may deplete host UNG protein, and incude G2-M cell cycle arrest. Acts by targeting specific host proteins for degradation by the 26S proteasome, through association with the cellular CUL4A-DDB1 E3 ligase complex by direct interaction with host VPRPB/DCAF-1. Cell cycle arrest reportedly occurs within hours of infection and is not blocked by antiviral agents, suggesting that it is initiated by the VPR carried into the virion. Additionally, VPR induces apoptosis in a cell cycle dependent manner suggesting that these two effects are mechanistically linked. Detected in the serum and cerebrospinal fluid of AIDS patient, VPR may also induce cell death to bystander cells.</text>
</comment>
<comment type="function">
    <text evidence="1">During virus entry, plays a role in the transport of the viral pre-integration (PIC) complex to the host nucleus. This function is crucial for viral infection of non-dividing macrophages. May act directly at the nuclear pore complex, by binding nucleoporins phenylalanine-glycine (FG)-repeat regions.</text>
</comment>
<comment type="subunit">
    <text evidence="1">Homooligomer, may form homodimer. Interacts with p6-gag region of the Pr55 Gag precursor protein through a (Leu-X-X)4 motif near the C-terminus of the P6gag protein. Interacts with host UNG. May interact with host RAD23A/HHR23A. Interacts with host VPRBP/DCAF1, leading to hijack the CUL4A-RBX1-DDB1-DCAF1/VPRBP complex, mediating ubiquitination of host proteins such as TERT and ZGPAT and arrest of the cell cycle in G2 phase.</text>
</comment>
<comment type="subcellular location">
    <subcellularLocation>
        <location evidence="1">Virion</location>
    </subcellularLocation>
    <subcellularLocation>
        <location evidence="1">Host nucleus</location>
    </subcellularLocation>
    <subcellularLocation>
        <location evidence="1">Host extracellular space</location>
    </subcellularLocation>
    <text evidence="1">Incorporation into virion is dependent on p6 GAG sequences. Lacks a canonical nuclear localization signal, thus import into nucleus may function independently of the human importin pathway. Detected in high quantity in the serum and cerebrospinal fluid of AIDS patient.</text>
</comment>
<comment type="PTM">
    <text evidence="1">Phosphorylated on several residues by host. These phosphorylations regulate VPR activity for the nuclear import of the HIV-1 pre-integration complex.</text>
</comment>
<comment type="miscellaneous">
    <text evidence="1">HIV-1 lineages are divided in three main groups, M (for Major), O (for Outlier), and N (for New, or Non-M, Non-O). The vast majority of strains found worldwide belong to the group M. Group O seems to be endemic to and largely confined to Cameroon and neighboring countries in West Central Africa, where these viruses represent a small minority of HIV-1 strains. The group N is represented by a limited number of isolates from Cameroonian persons. The group M is further subdivided in 9 clades or subtypes (A to D, F to H, J and K).</text>
</comment>
<comment type="similarity">
    <text evidence="1">Belongs to the HIV-1 VPR protein family.</text>
</comment>
<dbReference type="EMBL" id="L20587">
    <property type="protein sequence ID" value="AAA99881.1"/>
    <property type="molecule type" value="Genomic_RNA"/>
</dbReference>
<dbReference type="SMR" id="Q77375"/>
<dbReference type="Proteomes" id="UP000007689">
    <property type="component" value="Segment"/>
</dbReference>
<dbReference type="GO" id="GO:0043657">
    <property type="term" value="C:host cell"/>
    <property type="evidence" value="ECO:0007669"/>
    <property type="project" value="GOC"/>
</dbReference>
<dbReference type="GO" id="GO:0042025">
    <property type="term" value="C:host cell nucleus"/>
    <property type="evidence" value="ECO:0007669"/>
    <property type="project" value="UniProtKB-SubCell"/>
</dbReference>
<dbReference type="GO" id="GO:0043655">
    <property type="term" value="C:host extracellular space"/>
    <property type="evidence" value="ECO:0007669"/>
    <property type="project" value="UniProtKB-SubCell"/>
</dbReference>
<dbReference type="GO" id="GO:0044423">
    <property type="term" value="C:virion component"/>
    <property type="evidence" value="ECO:0007669"/>
    <property type="project" value="UniProtKB-UniRule"/>
</dbReference>
<dbReference type="GO" id="GO:0006351">
    <property type="term" value="P:DNA-templated transcription"/>
    <property type="evidence" value="ECO:0007669"/>
    <property type="project" value="UniProtKB-UniRule"/>
</dbReference>
<dbReference type="GO" id="GO:0034220">
    <property type="term" value="P:monoatomic ion transmembrane transport"/>
    <property type="evidence" value="ECO:0007669"/>
    <property type="project" value="UniProtKB-KW"/>
</dbReference>
<dbReference type="GO" id="GO:0051260">
    <property type="term" value="P:protein homooligomerization"/>
    <property type="evidence" value="ECO:0007669"/>
    <property type="project" value="UniProtKB-UniRule"/>
</dbReference>
<dbReference type="GO" id="GO:0006355">
    <property type="term" value="P:regulation of DNA-templated transcription"/>
    <property type="evidence" value="ECO:0007669"/>
    <property type="project" value="UniProtKB-UniRule"/>
</dbReference>
<dbReference type="GO" id="GO:0046718">
    <property type="term" value="P:symbiont entry into host cell"/>
    <property type="evidence" value="ECO:0007669"/>
    <property type="project" value="UniProtKB-KW"/>
</dbReference>
<dbReference type="GO" id="GO:0052151">
    <property type="term" value="P:symbiont-mediated activation of host apoptosis"/>
    <property type="evidence" value="ECO:0007669"/>
    <property type="project" value="UniProtKB-UniRule"/>
</dbReference>
<dbReference type="GO" id="GO:0039592">
    <property type="term" value="P:symbiont-mediated arrest of host cell cycle during G2/M transition"/>
    <property type="evidence" value="ECO:0007669"/>
    <property type="project" value="UniProtKB-UniRule"/>
</dbReference>
<dbReference type="GO" id="GO:0075732">
    <property type="term" value="P:viral penetration into host nucleus"/>
    <property type="evidence" value="ECO:0007669"/>
    <property type="project" value="UniProtKB-UniRule"/>
</dbReference>
<dbReference type="Gene3D" id="6.10.210.10">
    <property type="match status" value="1"/>
</dbReference>
<dbReference type="Gene3D" id="1.20.5.90">
    <property type="entry name" value="VpR/VpX protein, C-terminal domain"/>
    <property type="match status" value="1"/>
</dbReference>
<dbReference type="HAMAP" id="MF_04080">
    <property type="entry name" value="HIV_VPR"/>
    <property type="match status" value="1"/>
</dbReference>
<dbReference type="InterPro" id="IPR000012">
    <property type="entry name" value="RetroV_VpR/X"/>
</dbReference>
<dbReference type="Pfam" id="PF00522">
    <property type="entry name" value="VPR"/>
    <property type="match status" value="1"/>
</dbReference>
<dbReference type="PRINTS" id="PR00444">
    <property type="entry name" value="HIVVPRVPX"/>
</dbReference>
<accession>Q77375</accession>
<organismHost>
    <name type="scientific">Homo sapiens</name>
    <name type="common">Human</name>
    <dbReference type="NCBI Taxonomy" id="9606"/>
</organismHost>
<name>VPR_HV1AN</name>
<gene>
    <name evidence="1" type="primary">vpr</name>
</gene>
<keyword id="KW-0010">Activator</keyword>
<keyword id="KW-0014">AIDS</keyword>
<keyword id="KW-0053">Apoptosis</keyword>
<keyword id="KW-0131">Cell cycle</keyword>
<keyword id="KW-1079">Host G2/M cell cycle arrest by virus</keyword>
<keyword id="KW-1048">Host nucleus</keyword>
<keyword id="KW-0945">Host-virus interaction</keyword>
<keyword id="KW-0407">Ion channel</keyword>
<keyword id="KW-0406">Ion transport</keyword>
<keyword id="KW-1121">Modulation of host cell cycle by virus</keyword>
<keyword id="KW-0597">Phosphoprotein</keyword>
<keyword id="KW-1185">Reference proteome</keyword>
<keyword id="KW-0804">Transcription</keyword>
<keyword id="KW-0805">Transcription regulation</keyword>
<keyword id="KW-0813">Transport</keyword>
<keyword id="KW-1163">Viral penetration into host nucleus</keyword>
<keyword id="KW-0946">Virion</keyword>
<keyword id="KW-1160">Virus entry into host cell</keyword>
<evidence type="ECO:0000255" key="1">
    <source>
        <dbReference type="HAMAP-Rule" id="MF_04080"/>
    </source>
</evidence>
<reference key="1">
    <citation type="journal article" date="1994" name="J. Virol.">
        <title>Genomic cloning and complete sequence analysis of a highly divergent African human immunodeficiency virus isolate.</title>
        <authorList>
            <person name="Vanden Haesevelde M."/>
            <person name="Decourt J.L."/>
            <person name="De Leys R.J."/>
            <person name="Vanderborght B."/>
            <person name="van der Groen G."/>
            <person name="van Heuverswijn H."/>
            <person name="Saman E."/>
        </authorList>
    </citation>
    <scope>NUCLEOTIDE SEQUENCE [GENOMIC RNA]</scope>
</reference>
<feature type="chain" id="PRO_0000246757" description="Protein Vpr">
    <location>
        <begin position="1"/>
        <end position="97"/>
    </location>
</feature>
<feature type="region of interest" description="Homooligomerization" evidence="1">
    <location>
        <begin position="1"/>
        <end position="42"/>
    </location>
</feature>
<feature type="modified residue" description="Phosphoserine; by host" evidence="1">
    <location>
        <position position="79"/>
    </location>
</feature>
<feature type="modified residue" description="Phosphoserine; by host" evidence="1">
    <location>
        <position position="95"/>
    </location>
</feature>
<feature type="modified residue" description="Phosphoserine; by host" evidence="1">
    <location>
        <position position="97"/>
    </location>
</feature>
<proteinExistence type="inferred from homology"/>